<accession>Q8NZY8</accession>
<feature type="chain" id="PRO_0000152211" description="NH(3)-dependent NAD(+) synthetase">
    <location>
        <begin position="1"/>
        <end position="274"/>
    </location>
</feature>
<feature type="binding site" evidence="1">
    <location>
        <begin position="46"/>
        <end position="53"/>
    </location>
    <ligand>
        <name>ATP</name>
        <dbReference type="ChEBI" id="CHEBI:30616"/>
    </ligand>
</feature>
<feature type="binding site" evidence="1">
    <location>
        <position position="52"/>
    </location>
    <ligand>
        <name>Mg(2+)</name>
        <dbReference type="ChEBI" id="CHEBI:18420"/>
    </ligand>
</feature>
<feature type="binding site" evidence="1">
    <location>
        <position position="140"/>
    </location>
    <ligand>
        <name>deamido-NAD(+)</name>
        <dbReference type="ChEBI" id="CHEBI:58437"/>
    </ligand>
</feature>
<feature type="binding site" evidence="1">
    <location>
        <position position="160"/>
    </location>
    <ligand>
        <name>ATP</name>
        <dbReference type="ChEBI" id="CHEBI:30616"/>
    </ligand>
</feature>
<feature type="binding site" evidence="1">
    <location>
        <position position="165"/>
    </location>
    <ligand>
        <name>Mg(2+)</name>
        <dbReference type="ChEBI" id="CHEBI:18420"/>
    </ligand>
</feature>
<feature type="binding site" evidence="1">
    <location>
        <position position="173"/>
    </location>
    <ligand>
        <name>deamido-NAD(+)</name>
        <dbReference type="ChEBI" id="CHEBI:58437"/>
    </ligand>
</feature>
<feature type="binding site" evidence="1">
    <location>
        <position position="180"/>
    </location>
    <ligand>
        <name>deamido-NAD(+)</name>
        <dbReference type="ChEBI" id="CHEBI:58437"/>
    </ligand>
</feature>
<feature type="binding site" evidence="1">
    <location>
        <position position="189"/>
    </location>
    <ligand>
        <name>ATP</name>
        <dbReference type="ChEBI" id="CHEBI:30616"/>
    </ligand>
</feature>
<feature type="binding site" evidence="1">
    <location>
        <position position="211"/>
    </location>
    <ligand>
        <name>ATP</name>
        <dbReference type="ChEBI" id="CHEBI:30616"/>
    </ligand>
</feature>
<feature type="binding site" evidence="1">
    <location>
        <begin position="260"/>
        <end position="261"/>
    </location>
    <ligand>
        <name>deamido-NAD(+)</name>
        <dbReference type="ChEBI" id="CHEBI:58437"/>
    </ligand>
</feature>
<reference key="1">
    <citation type="journal article" date="2002" name="Proc. Natl. Acad. Sci. U.S.A.">
        <title>Genome sequence and comparative microarray analysis of serotype M18 group A Streptococcus strains associated with acute rheumatic fever outbreaks.</title>
        <authorList>
            <person name="Smoot J.C."/>
            <person name="Barbian K.D."/>
            <person name="Van Gompel J.J."/>
            <person name="Smoot L.M."/>
            <person name="Chaussee M.S."/>
            <person name="Sylva G.L."/>
            <person name="Sturdevant D.E."/>
            <person name="Ricklefs S.M."/>
            <person name="Porcella S.F."/>
            <person name="Parkins L.D."/>
            <person name="Beres S.B."/>
            <person name="Campbell D.S."/>
            <person name="Smith T.M."/>
            <person name="Zhang Q."/>
            <person name="Kapur V."/>
            <person name="Daly J.A."/>
            <person name="Veasy L.G."/>
            <person name="Musser J.M."/>
        </authorList>
    </citation>
    <scope>NUCLEOTIDE SEQUENCE [LARGE SCALE GENOMIC DNA]</scope>
    <source>
        <strain>MGAS8232</strain>
    </source>
</reference>
<proteinExistence type="inferred from homology"/>
<sequence>MTLQEEIIRQLGVKASIDPKEEIRKTVDFLKTYLRKHSFLKTYVLGISGGQDSTLAGKLAQMAIAELREETGDQAYQFIAVRLPYGVQADEADAQKALAFIMPDQTLTINIKAAVDGQVAALQEAGIEISDFNKGNIKARQRMISQYAIAGQMAGAVIGTDHAAENITGFFTKFGDGGADILPLFRLNKRQGKALLKVLGADAALYEKVPTADLEDQKPGLADEVALGVTYQDIDDYLEGKLISKVAQATIEKWWHKGQHKRHLPITIFDDFWK</sequence>
<dbReference type="EC" id="6.3.1.5" evidence="1"/>
<dbReference type="EMBL" id="AE009949">
    <property type="protein sequence ID" value="AAL98207.1"/>
    <property type="molecule type" value="Genomic_DNA"/>
</dbReference>
<dbReference type="RefSeq" id="WP_011018069.1">
    <property type="nucleotide sequence ID" value="NC_003485.1"/>
</dbReference>
<dbReference type="SMR" id="Q8NZY8"/>
<dbReference type="KEGG" id="spm:spyM18_1663"/>
<dbReference type="HOGENOM" id="CLU_059327_3_0_9"/>
<dbReference type="UniPathway" id="UPA00253">
    <property type="reaction ID" value="UER00333"/>
</dbReference>
<dbReference type="GO" id="GO:0005737">
    <property type="term" value="C:cytoplasm"/>
    <property type="evidence" value="ECO:0007669"/>
    <property type="project" value="InterPro"/>
</dbReference>
<dbReference type="GO" id="GO:0005524">
    <property type="term" value="F:ATP binding"/>
    <property type="evidence" value="ECO:0007669"/>
    <property type="project" value="UniProtKB-UniRule"/>
</dbReference>
<dbReference type="GO" id="GO:0004359">
    <property type="term" value="F:glutaminase activity"/>
    <property type="evidence" value="ECO:0007669"/>
    <property type="project" value="InterPro"/>
</dbReference>
<dbReference type="GO" id="GO:0046872">
    <property type="term" value="F:metal ion binding"/>
    <property type="evidence" value="ECO:0007669"/>
    <property type="project" value="UniProtKB-KW"/>
</dbReference>
<dbReference type="GO" id="GO:0003952">
    <property type="term" value="F:NAD+ synthase (glutamine-hydrolyzing) activity"/>
    <property type="evidence" value="ECO:0007669"/>
    <property type="project" value="InterPro"/>
</dbReference>
<dbReference type="GO" id="GO:0008795">
    <property type="term" value="F:NAD+ synthase activity"/>
    <property type="evidence" value="ECO:0007669"/>
    <property type="project" value="UniProtKB-UniRule"/>
</dbReference>
<dbReference type="GO" id="GO:0009435">
    <property type="term" value="P:NAD biosynthetic process"/>
    <property type="evidence" value="ECO:0007669"/>
    <property type="project" value="UniProtKB-UniRule"/>
</dbReference>
<dbReference type="CDD" id="cd00553">
    <property type="entry name" value="NAD_synthase"/>
    <property type="match status" value="1"/>
</dbReference>
<dbReference type="FunFam" id="3.40.50.620:FF:000015">
    <property type="entry name" value="NH(3)-dependent NAD(+) synthetase"/>
    <property type="match status" value="1"/>
</dbReference>
<dbReference type="Gene3D" id="3.40.50.620">
    <property type="entry name" value="HUPs"/>
    <property type="match status" value="1"/>
</dbReference>
<dbReference type="HAMAP" id="MF_00193">
    <property type="entry name" value="NadE_ammonia_dep"/>
    <property type="match status" value="1"/>
</dbReference>
<dbReference type="InterPro" id="IPR022310">
    <property type="entry name" value="NAD/GMP_synthase"/>
</dbReference>
<dbReference type="InterPro" id="IPR003694">
    <property type="entry name" value="NAD_synthase"/>
</dbReference>
<dbReference type="InterPro" id="IPR022926">
    <property type="entry name" value="NH(3)-dep_NAD(+)_synth"/>
</dbReference>
<dbReference type="InterPro" id="IPR014729">
    <property type="entry name" value="Rossmann-like_a/b/a_fold"/>
</dbReference>
<dbReference type="NCBIfam" id="TIGR00552">
    <property type="entry name" value="nadE"/>
    <property type="match status" value="1"/>
</dbReference>
<dbReference type="NCBIfam" id="NF001979">
    <property type="entry name" value="PRK00768.1"/>
    <property type="match status" value="1"/>
</dbReference>
<dbReference type="PANTHER" id="PTHR23090">
    <property type="entry name" value="NH 3 /GLUTAMINE-DEPENDENT NAD + SYNTHETASE"/>
    <property type="match status" value="1"/>
</dbReference>
<dbReference type="PANTHER" id="PTHR23090:SF7">
    <property type="entry name" value="NH(3)-DEPENDENT NAD(+) SYNTHETASE"/>
    <property type="match status" value="1"/>
</dbReference>
<dbReference type="Pfam" id="PF02540">
    <property type="entry name" value="NAD_synthase"/>
    <property type="match status" value="1"/>
</dbReference>
<dbReference type="SUPFAM" id="SSF52402">
    <property type="entry name" value="Adenine nucleotide alpha hydrolases-like"/>
    <property type="match status" value="1"/>
</dbReference>
<name>NADE_STRP8</name>
<gene>
    <name evidence="1" type="primary">nadE</name>
    <name type="ordered locus">spyM18_1663</name>
</gene>
<evidence type="ECO:0000255" key="1">
    <source>
        <dbReference type="HAMAP-Rule" id="MF_00193"/>
    </source>
</evidence>
<protein>
    <recommendedName>
        <fullName evidence="1">NH(3)-dependent NAD(+) synthetase</fullName>
        <ecNumber evidence="1">6.3.1.5</ecNumber>
    </recommendedName>
</protein>
<organism>
    <name type="scientific">Streptococcus pyogenes serotype M18 (strain MGAS8232)</name>
    <dbReference type="NCBI Taxonomy" id="186103"/>
    <lineage>
        <taxon>Bacteria</taxon>
        <taxon>Bacillati</taxon>
        <taxon>Bacillota</taxon>
        <taxon>Bacilli</taxon>
        <taxon>Lactobacillales</taxon>
        <taxon>Streptococcaceae</taxon>
        <taxon>Streptococcus</taxon>
    </lineage>
</organism>
<keyword id="KW-0067">ATP-binding</keyword>
<keyword id="KW-0436">Ligase</keyword>
<keyword id="KW-0460">Magnesium</keyword>
<keyword id="KW-0479">Metal-binding</keyword>
<keyword id="KW-0520">NAD</keyword>
<keyword id="KW-0547">Nucleotide-binding</keyword>
<comment type="function">
    <text evidence="1">Catalyzes the ATP-dependent amidation of deamido-NAD to form NAD. Uses ammonia as a nitrogen source.</text>
</comment>
<comment type="catalytic activity">
    <reaction evidence="1">
        <text>deamido-NAD(+) + NH4(+) + ATP = AMP + diphosphate + NAD(+) + H(+)</text>
        <dbReference type="Rhea" id="RHEA:21188"/>
        <dbReference type="ChEBI" id="CHEBI:15378"/>
        <dbReference type="ChEBI" id="CHEBI:28938"/>
        <dbReference type="ChEBI" id="CHEBI:30616"/>
        <dbReference type="ChEBI" id="CHEBI:33019"/>
        <dbReference type="ChEBI" id="CHEBI:57540"/>
        <dbReference type="ChEBI" id="CHEBI:58437"/>
        <dbReference type="ChEBI" id="CHEBI:456215"/>
        <dbReference type="EC" id="6.3.1.5"/>
    </reaction>
</comment>
<comment type="pathway">
    <text evidence="1">Cofactor biosynthesis; NAD(+) biosynthesis; NAD(+) from deamido-NAD(+) (ammonia route): step 1/1.</text>
</comment>
<comment type="subunit">
    <text evidence="1">Homodimer.</text>
</comment>
<comment type="similarity">
    <text evidence="1">Belongs to the NAD synthetase family.</text>
</comment>